<dbReference type="EC" id="2.7.7.7" evidence="1"/>
<dbReference type="EMBL" id="CP000423">
    <property type="protein sequence ID" value="ABJ70352.1"/>
    <property type="molecule type" value="Genomic_DNA"/>
</dbReference>
<dbReference type="RefSeq" id="WP_011674539.1">
    <property type="nucleotide sequence ID" value="NC_008526.1"/>
</dbReference>
<dbReference type="RefSeq" id="YP_806794.1">
    <property type="nucleotide sequence ID" value="NC_008526.1"/>
</dbReference>
<dbReference type="SMR" id="Q038M0"/>
<dbReference type="STRING" id="321967.LSEI_1578"/>
<dbReference type="PaxDb" id="321967-LSEI_1578"/>
<dbReference type="KEGG" id="lca:LSEI_1578"/>
<dbReference type="PATRIC" id="fig|321967.11.peg.1558"/>
<dbReference type="HOGENOM" id="CLU_003297_0_0_9"/>
<dbReference type="Proteomes" id="UP000001651">
    <property type="component" value="Chromosome"/>
</dbReference>
<dbReference type="GO" id="GO:0005737">
    <property type="term" value="C:cytoplasm"/>
    <property type="evidence" value="ECO:0007669"/>
    <property type="project" value="UniProtKB-SubCell"/>
</dbReference>
<dbReference type="GO" id="GO:0008408">
    <property type="term" value="F:3'-5' exonuclease activity"/>
    <property type="evidence" value="ECO:0007669"/>
    <property type="project" value="UniProtKB-UniRule"/>
</dbReference>
<dbReference type="GO" id="GO:0003677">
    <property type="term" value="F:DNA binding"/>
    <property type="evidence" value="ECO:0007669"/>
    <property type="project" value="UniProtKB-UniRule"/>
</dbReference>
<dbReference type="GO" id="GO:0003887">
    <property type="term" value="F:DNA-directed DNA polymerase activity"/>
    <property type="evidence" value="ECO:0007669"/>
    <property type="project" value="UniProtKB-UniRule"/>
</dbReference>
<dbReference type="GO" id="GO:0006261">
    <property type="term" value="P:DNA-templated DNA replication"/>
    <property type="evidence" value="ECO:0007669"/>
    <property type="project" value="UniProtKB-UniRule"/>
</dbReference>
<dbReference type="CDD" id="cd06127">
    <property type="entry name" value="DEDDh"/>
    <property type="match status" value="1"/>
</dbReference>
<dbReference type="CDD" id="cd07435">
    <property type="entry name" value="PHP_PolIIIA_POLC"/>
    <property type="match status" value="1"/>
</dbReference>
<dbReference type="CDD" id="cd04484">
    <property type="entry name" value="polC_OBF"/>
    <property type="match status" value="1"/>
</dbReference>
<dbReference type="FunFam" id="3.30.420.10:FF:000045">
    <property type="entry name" value="3'-5' exonuclease DinG"/>
    <property type="match status" value="1"/>
</dbReference>
<dbReference type="Gene3D" id="1.10.150.870">
    <property type="match status" value="1"/>
</dbReference>
<dbReference type="Gene3D" id="3.30.1900.20">
    <property type="match status" value="2"/>
</dbReference>
<dbReference type="Gene3D" id="6.10.140.1510">
    <property type="match status" value="1"/>
</dbReference>
<dbReference type="Gene3D" id="3.20.20.140">
    <property type="entry name" value="Metal-dependent hydrolases"/>
    <property type="match status" value="1"/>
</dbReference>
<dbReference type="Gene3D" id="2.40.50.140">
    <property type="entry name" value="Nucleic acid-binding proteins"/>
    <property type="match status" value="1"/>
</dbReference>
<dbReference type="Gene3D" id="1.10.150.700">
    <property type="entry name" value="PolC, middle finger domain"/>
    <property type="match status" value="1"/>
</dbReference>
<dbReference type="Gene3D" id="3.30.420.10">
    <property type="entry name" value="Ribonuclease H-like superfamily/Ribonuclease H"/>
    <property type="match status" value="1"/>
</dbReference>
<dbReference type="HAMAP" id="MF_00356">
    <property type="entry name" value="DNApol_PolC"/>
    <property type="match status" value="1"/>
</dbReference>
<dbReference type="InterPro" id="IPR011708">
    <property type="entry name" value="DNA_pol3_alpha_NTPase_dom"/>
</dbReference>
<dbReference type="InterPro" id="IPR040982">
    <property type="entry name" value="DNA_pol3_finger"/>
</dbReference>
<dbReference type="InterPro" id="IPR024754">
    <property type="entry name" value="DNA_PolC-like_N_II"/>
</dbReference>
<dbReference type="InterPro" id="IPR028112">
    <property type="entry name" value="DNA_PolC-type_N_I"/>
</dbReference>
<dbReference type="InterPro" id="IPR004805">
    <property type="entry name" value="DnaE2/DnaE/PolC"/>
</dbReference>
<dbReference type="InterPro" id="IPR029460">
    <property type="entry name" value="DNAPol_HHH"/>
</dbReference>
<dbReference type="InterPro" id="IPR006054">
    <property type="entry name" value="DnaQ"/>
</dbReference>
<dbReference type="InterPro" id="IPR013520">
    <property type="entry name" value="Exonuclease_RNaseT/DNA_pol3"/>
</dbReference>
<dbReference type="InterPro" id="IPR012340">
    <property type="entry name" value="NA-bd_OB-fold"/>
</dbReference>
<dbReference type="InterPro" id="IPR004365">
    <property type="entry name" value="NA-bd_OB_tRNA"/>
</dbReference>
<dbReference type="InterPro" id="IPR004013">
    <property type="entry name" value="PHP_dom"/>
</dbReference>
<dbReference type="InterPro" id="IPR003141">
    <property type="entry name" value="Pol/His_phosphatase_N"/>
</dbReference>
<dbReference type="InterPro" id="IPR016195">
    <property type="entry name" value="Pol/histidinol_Pase-like"/>
</dbReference>
<dbReference type="InterPro" id="IPR006308">
    <property type="entry name" value="Pol_III_a_PolC-type_gram_pos"/>
</dbReference>
<dbReference type="InterPro" id="IPR044923">
    <property type="entry name" value="PolC_middle_finger_sf"/>
</dbReference>
<dbReference type="InterPro" id="IPR012337">
    <property type="entry name" value="RNaseH-like_sf"/>
</dbReference>
<dbReference type="InterPro" id="IPR036397">
    <property type="entry name" value="RNaseH_sf"/>
</dbReference>
<dbReference type="NCBIfam" id="TIGR00573">
    <property type="entry name" value="dnaq"/>
    <property type="match status" value="1"/>
</dbReference>
<dbReference type="NCBIfam" id="TIGR01405">
    <property type="entry name" value="polC_Gram_pos"/>
    <property type="match status" value="1"/>
</dbReference>
<dbReference type="NCBIfam" id="NF001688">
    <property type="entry name" value="PRK00448.1"/>
    <property type="match status" value="1"/>
</dbReference>
<dbReference type="PANTHER" id="PTHR32294:SF5">
    <property type="entry name" value="DNA POLYMERASE III POLC-TYPE"/>
    <property type="match status" value="1"/>
</dbReference>
<dbReference type="PANTHER" id="PTHR32294">
    <property type="entry name" value="DNA POLYMERASE III SUBUNIT ALPHA"/>
    <property type="match status" value="1"/>
</dbReference>
<dbReference type="Pfam" id="PF14480">
    <property type="entry name" value="DNA_pol3_a_NI"/>
    <property type="match status" value="1"/>
</dbReference>
<dbReference type="Pfam" id="PF11490">
    <property type="entry name" value="DNA_pol3_a_NII"/>
    <property type="match status" value="1"/>
</dbReference>
<dbReference type="Pfam" id="PF07733">
    <property type="entry name" value="DNA_pol3_alpha"/>
    <property type="match status" value="1"/>
</dbReference>
<dbReference type="Pfam" id="PF17657">
    <property type="entry name" value="DNA_pol3_finger"/>
    <property type="match status" value="1"/>
</dbReference>
<dbReference type="Pfam" id="PF14579">
    <property type="entry name" value="HHH_6"/>
    <property type="match status" value="1"/>
</dbReference>
<dbReference type="Pfam" id="PF02811">
    <property type="entry name" value="PHP"/>
    <property type="match status" value="2"/>
</dbReference>
<dbReference type="Pfam" id="PF00929">
    <property type="entry name" value="RNase_T"/>
    <property type="match status" value="1"/>
</dbReference>
<dbReference type="Pfam" id="PF01336">
    <property type="entry name" value="tRNA_anti-codon"/>
    <property type="match status" value="1"/>
</dbReference>
<dbReference type="SMART" id="SM00479">
    <property type="entry name" value="EXOIII"/>
    <property type="match status" value="1"/>
</dbReference>
<dbReference type="SMART" id="SM00481">
    <property type="entry name" value="POLIIIAc"/>
    <property type="match status" value="1"/>
</dbReference>
<dbReference type="SUPFAM" id="SSF160975">
    <property type="entry name" value="AF1531-like"/>
    <property type="match status" value="1"/>
</dbReference>
<dbReference type="SUPFAM" id="SSF50249">
    <property type="entry name" value="Nucleic acid-binding proteins"/>
    <property type="match status" value="1"/>
</dbReference>
<dbReference type="SUPFAM" id="SSF89550">
    <property type="entry name" value="PHP domain-like"/>
    <property type="match status" value="1"/>
</dbReference>
<dbReference type="SUPFAM" id="SSF53098">
    <property type="entry name" value="Ribonuclease H-like"/>
    <property type="match status" value="1"/>
</dbReference>
<evidence type="ECO:0000255" key="1">
    <source>
        <dbReference type="HAMAP-Rule" id="MF_00356"/>
    </source>
</evidence>
<organism>
    <name type="scientific">Lacticaseibacillus paracasei (strain ATCC 334 / BCRC 17002 / CCUG 31169 / CIP 107868 / KCTC 3260 / NRRL B-441)</name>
    <name type="common">Lactobacillus paracasei</name>
    <dbReference type="NCBI Taxonomy" id="321967"/>
    <lineage>
        <taxon>Bacteria</taxon>
        <taxon>Bacillati</taxon>
        <taxon>Bacillota</taxon>
        <taxon>Bacilli</taxon>
        <taxon>Lactobacillales</taxon>
        <taxon>Lactobacillaceae</taxon>
        <taxon>Lacticaseibacillus</taxon>
    </lineage>
</organism>
<gene>
    <name evidence="1" type="primary">polC</name>
    <name type="ordered locus">LSEI_1578</name>
</gene>
<feature type="chain" id="PRO_1000048473" description="DNA polymerase III PolC-type">
    <location>
        <begin position="1"/>
        <end position="1444"/>
    </location>
</feature>
<feature type="domain" description="Exonuclease">
    <location>
        <begin position="421"/>
        <end position="577"/>
    </location>
</feature>
<keyword id="KW-0963">Cytoplasm</keyword>
<keyword id="KW-0235">DNA replication</keyword>
<keyword id="KW-0239">DNA-directed DNA polymerase</keyword>
<keyword id="KW-0269">Exonuclease</keyword>
<keyword id="KW-0378">Hydrolase</keyword>
<keyword id="KW-0540">Nuclease</keyword>
<keyword id="KW-0548">Nucleotidyltransferase</keyword>
<keyword id="KW-1185">Reference proteome</keyword>
<keyword id="KW-0808">Transferase</keyword>
<proteinExistence type="inferred from homology"/>
<name>DPO3_LACP3</name>
<sequence>MALSQHEMFEKLLDQLDLAADVRQDPSLTSGTVQNVTIHEQSRRYDFTLGFDAILPFQTFNAIATKLPLVFQQIAATDLSVVVTQPTITDELLAQYWQYVVTHAEIGTGIVRELCEKQVPTLENDRAVIKTENEQIRQYLIQQGLGKLEETYRQVGFSGLRMQAEVDEEQAAQSMAAFQAQRAEETAKMAKAAAEVVKQQAAKQKQVQTDGPVQMGRQMKMTDAPQQMVTITQEERSVTVEGYVFDVEVRELRSKRQLLIFKVTDYSSSFIAKKFSNGPEDEAMFARIQKGQWLRVRGSVQEDNYSRELTINAQDIQTVSHPDPTDDAEGEKRVELHLHTNMSQMDAMNPISDYVKRAKEWGHKAIAVTDHAGLQAYPEAHSAAVKAGLKMLYGVEINLVDDGTPVAYRADEPRDLASAEYVVFDVETTGLSAVYDKVIELAAVKMKDGKVIDQFEEMIDPGFPLSELTINLTHITDDMVHGSKSEVDVFKLFQQFCDGAIMVGHNVTFDVGFLDNGYERHGLADIDNPVIDTLELSRMLHPERKNHKLDTLAKQYKVSLEHHHRANADAEATGYLLYALEKEAAKMYGMTTLNQLNDRVGAGDAYKAARPSHAIVFAKTQAGLKNLFKLVSLSNVKYFYRVPRVPRSQLQKLREGLLVGSACSNGEVFTAMMQKGEAEARAKASFYDYLEVQPLPVYQPLIEAGLIKGEAHLKDIIQKIIKIGSELEKPVVATGDAHYLDQHDAIYRQILIHSQGGANPLNRHSLPDVHFRSTSEMLTDFSWLGEEKAHELVVDNSNLIANWVDDDITPVKDKLYTPEVPGVEENLKHDVMTTAHELYGDPLPDIVAQRLDKELKSIIGNGFSVIYNIAQRLVLKSNKDGYLVGSRGSVGSSLAATMAGITEVNPLPPHYRCPNCQYSEFFTHGEIGSGFDLPDKQCPKCGADLHKDGHDIPFETFLGFHGDKVPDIDLNFSGDYQPIAHNYIKVMFGEDHSFRAGTIGTVADKTAYGYVKAYERDTGQQLRGAEIDRLAQGDTGVKRTTGQHPAGILIVPADMDIYDFTPIQYPADDQNAAWMTTHFDFHSIHDNILKMDVLGHDDPTMIRMLQDLSGVEPKSIPTDDPGVMALFSGTKSLGVTPEQINSKMGTLGIPEFGTRFVRGMLEETKPTTFSELLQISGLSHGTDVWLGNAEELIKQGIVTLKEVIGCRDNIMMDLIHWGMEDSMAFNIMEHVRKGRGIPDDWQKAMRENENVPDWYIESCLKIKYMFPKAHATAYILMALRIAWFKVHYPLIYYTAYFSVRAEDFDLAAMSHGKEAVKAAMKEITDKGMDASTKEKQLLTVLEIANECLERGFKIKMIDVTKSDSHNFLIQDDHTILAPFRAVPGLGDNVAKQIVAAREEKPFLSKEDLANRGKVSKTLIDYMTTNHVLDDLPDENQLSLFDGLF</sequence>
<accession>Q038M0</accession>
<protein>
    <recommendedName>
        <fullName evidence="1">DNA polymerase III PolC-type</fullName>
        <shortName evidence="1">PolIII</shortName>
        <ecNumber evidence="1">2.7.7.7</ecNumber>
    </recommendedName>
</protein>
<comment type="function">
    <text evidence="1">Required for replicative DNA synthesis. This DNA polymerase also exhibits 3' to 5' exonuclease activity.</text>
</comment>
<comment type="catalytic activity">
    <reaction evidence="1">
        <text>DNA(n) + a 2'-deoxyribonucleoside 5'-triphosphate = DNA(n+1) + diphosphate</text>
        <dbReference type="Rhea" id="RHEA:22508"/>
        <dbReference type="Rhea" id="RHEA-COMP:17339"/>
        <dbReference type="Rhea" id="RHEA-COMP:17340"/>
        <dbReference type="ChEBI" id="CHEBI:33019"/>
        <dbReference type="ChEBI" id="CHEBI:61560"/>
        <dbReference type="ChEBI" id="CHEBI:173112"/>
        <dbReference type="EC" id="2.7.7.7"/>
    </reaction>
</comment>
<comment type="subcellular location">
    <subcellularLocation>
        <location evidence="1">Cytoplasm</location>
    </subcellularLocation>
</comment>
<comment type="similarity">
    <text evidence="1">Belongs to the DNA polymerase type-C family. PolC subfamily.</text>
</comment>
<reference key="1">
    <citation type="journal article" date="2006" name="Proc. Natl. Acad. Sci. U.S.A.">
        <title>Comparative genomics of the lactic acid bacteria.</title>
        <authorList>
            <person name="Makarova K.S."/>
            <person name="Slesarev A."/>
            <person name="Wolf Y.I."/>
            <person name="Sorokin A."/>
            <person name="Mirkin B."/>
            <person name="Koonin E.V."/>
            <person name="Pavlov A."/>
            <person name="Pavlova N."/>
            <person name="Karamychev V."/>
            <person name="Polouchine N."/>
            <person name="Shakhova V."/>
            <person name="Grigoriev I."/>
            <person name="Lou Y."/>
            <person name="Rohksar D."/>
            <person name="Lucas S."/>
            <person name="Huang K."/>
            <person name="Goodstein D.M."/>
            <person name="Hawkins T."/>
            <person name="Plengvidhya V."/>
            <person name="Welker D."/>
            <person name="Hughes J."/>
            <person name="Goh Y."/>
            <person name="Benson A."/>
            <person name="Baldwin K."/>
            <person name="Lee J.-H."/>
            <person name="Diaz-Muniz I."/>
            <person name="Dosti B."/>
            <person name="Smeianov V."/>
            <person name="Wechter W."/>
            <person name="Barabote R."/>
            <person name="Lorca G."/>
            <person name="Altermann E."/>
            <person name="Barrangou R."/>
            <person name="Ganesan B."/>
            <person name="Xie Y."/>
            <person name="Rawsthorne H."/>
            <person name="Tamir D."/>
            <person name="Parker C."/>
            <person name="Breidt F."/>
            <person name="Broadbent J.R."/>
            <person name="Hutkins R."/>
            <person name="O'Sullivan D."/>
            <person name="Steele J."/>
            <person name="Unlu G."/>
            <person name="Saier M.H. Jr."/>
            <person name="Klaenhammer T."/>
            <person name="Richardson P."/>
            <person name="Kozyavkin S."/>
            <person name="Weimer B.C."/>
            <person name="Mills D.A."/>
        </authorList>
    </citation>
    <scope>NUCLEOTIDE SEQUENCE [LARGE SCALE GENOMIC DNA]</scope>
    <source>
        <strain>ATCC 334 / BCRC 17002 / CCUG 31169 / CIP 107868 / KCTC 3260 / NRRL B-441</strain>
    </source>
</reference>